<proteinExistence type="inferred from homology"/>
<comment type="function">
    <text evidence="1">This protein binds specifically to 23S rRNA; its binding is stimulated by other ribosomal proteins, e.g. L4, L17, and L20. It is important during the early stages of 50S assembly. It makes multiple contacts with different domains of the 23S rRNA in the assembled 50S subunit and ribosome (By similarity).</text>
</comment>
<comment type="function">
    <text evidence="1">The globular domain of the protein is located near the polypeptide exit tunnel on the outside of the subunit, while an extended beta-hairpin is found that lines the wall of the exit tunnel in the center of the 70S ribosome.</text>
</comment>
<comment type="subunit">
    <text evidence="1">Part of the 50S ribosomal subunit.</text>
</comment>
<comment type="similarity">
    <text evidence="1">Belongs to the universal ribosomal protein uL22 family.</text>
</comment>
<gene>
    <name evidence="1" type="primary">rplV</name>
    <name evidence="1" type="synonym">rpl22</name>
    <name type="ordered locus">Syncc9605_0371</name>
</gene>
<dbReference type="EMBL" id="CP000110">
    <property type="protein sequence ID" value="ABB34147.1"/>
    <property type="molecule type" value="Genomic_DNA"/>
</dbReference>
<dbReference type="RefSeq" id="WP_011363387.1">
    <property type="nucleotide sequence ID" value="NC_007516.1"/>
</dbReference>
<dbReference type="SMR" id="Q3AMN5"/>
<dbReference type="STRING" id="110662.Syncc9605_0371"/>
<dbReference type="KEGG" id="syd:Syncc9605_0371"/>
<dbReference type="eggNOG" id="COG0091">
    <property type="taxonomic scope" value="Bacteria"/>
</dbReference>
<dbReference type="HOGENOM" id="CLU_083987_3_2_3"/>
<dbReference type="OrthoDB" id="9805969at2"/>
<dbReference type="GO" id="GO:0022625">
    <property type="term" value="C:cytosolic large ribosomal subunit"/>
    <property type="evidence" value="ECO:0007669"/>
    <property type="project" value="TreeGrafter"/>
</dbReference>
<dbReference type="GO" id="GO:0019843">
    <property type="term" value="F:rRNA binding"/>
    <property type="evidence" value="ECO:0007669"/>
    <property type="project" value="UniProtKB-UniRule"/>
</dbReference>
<dbReference type="GO" id="GO:0003735">
    <property type="term" value="F:structural constituent of ribosome"/>
    <property type="evidence" value="ECO:0007669"/>
    <property type="project" value="InterPro"/>
</dbReference>
<dbReference type="GO" id="GO:0006412">
    <property type="term" value="P:translation"/>
    <property type="evidence" value="ECO:0007669"/>
    <property type="project" value="UniProtKB-UniRule"/>
</dbReference>
<dbReference type="CDD" id="cd00336">
    <property type="entry name" value="Ribosomal_L22"/>
    <property type="match status" value="1"/>
</dbReference>
<dbReference type="Gene3D" id="3.90.470.10">
    <property type="entry name" value="Ribosomal protein L22/L17"/>
    <property type="match status" value="1"/>
</dbReference>
<dbReference type="HAMAP" id="MF_01331_B">
    <property type="entry name" value="Ribosomal_uL22_B"/>
    <property type="match status" value="1"/>
</dbReference>
<dbReference type="InterPro" id="IPR001063">
    <property type="entry name" value="Ribosomal_uL22"/>
</dbReference>
<dbReference type="InterPro" id="IPR005727">
    <property type="entry name" value="Ribosomal_uL22_bac/chlpt-type"/>
</dbReference>
<dbReference type="InterPro" id="IPR047867">
    <property type="entry name" value="Ribosomal_uL22_bac/org-type"/>
</dbReference>
<dbReference type="InterPro" id="IPR018260">
    <property type="entry name" value="Ribosomal_uL22_CS"/>
</dbReference>
<dbReference type="InterPro" id="IPR036394">
    <property type="entry name" value="Ribosomal_uL22_sf"/>
</dbReference>
<dbReference type="NCBIfam" id="TIGR01044">
    <property type="entry name" value="rplV_bact"/>
    <property type="match status" value="1"/>
</dbReference>
<dbReference type="PANTHER" id="PTHR13501">
    <property type="entry name" value="CHLOROPLAST 50S RIBOSOMAL PROTEIN L22-RELATED"/>
    <property type="match status" value="1"/>
</dbReference>
<dbReference type="PANTHER" id="PTHR13501:SF8">
    <property type="entry name" value="LARGE RIBOSOMAL SUBUNIT PROTEIN UL22M"/>
    <property type="match status" value="1"/>
</dbReference>
<dbReference type="Pfam" id="PF00237">
    <property type="entry name" value="Ribosomal_L22"/>
    <property type="match status" value="1"/>
</dbReference>
<dbReference type="SUPFAM" id="SSF54843">
    <property type="entry name" value="Ribosomal protein L22"/>
    <property type="match status" value="1"/>
</dbReference>
<dbReference type="PROSITE" id="PS00464">
    <property type="entry name" value="RIBOSOMAL_L22"/>
    <property type="match status" value="1"/>
</dbReference>
<organism>
    <name type="scientific">Synechococcus sp. (strain CC9605)</name>
    <dbReference type="NCBI Taxonomy" id="110662"/>
    <lineage>
        <taxon>Bacteria</taxon>
        <taxon>Bacillati</taxon>
        <taxon>Cyanobacteriota</taxon>
        <taxon>Cyanophyceae</taxon>
        <taxon>Synechococcales</taxon>
        <taxon>Synechococcaceae</taxon>
        <taxon>Synechococcus</taxon>
    </lineage>
</organism>
<accession>Q3AMN5</accession>
<keyword id="KW-0687">Ribonucleoprotein</keyword>
<keyword id="KW-0689">Ribosomal protein</keyword>
<keyword id="KW-0694">RNA-binding</keyword>
<keyword id="KW-0699">rRNA-binding</keyword>
<sequence length="121" mass="13246">MTSSTPTAPTAQAHGRFIRGSVSKVRRVLDQIRGRTYRDALIMLEFMPYRSTGPITKVLRSAVANAEHNLGLDPSSLVISSATADMGPSMKRYRPRAQGRAYQIKKQTCHISIAVAAQTDS</sequence>
<evidence type="ECO:0000255" key="1">
    <source>
        <dbReference type="HAMAP-Rule" id="MF_01331"/>
    </source>
</evidence>
<evidence type="ECO:0000305" key="2"/>
<name>RL22_SYNSC</name>
<protein>
    <recommendedName>
        <fullName evidence="1">Large ribosomal subunit protein uL22</fullName>
    </recommendedName>
    <alternativeName>
        <fullName evidence="2">50S ribosomal protein L22</fullName>
    </alternativeName>
</protein>
<feature type="chain" id="PRO_0000243216" description="Large ribosomal subunit protein uL22">
    <location>
        <begin position="1"/>
        <end position="121"/>
    </location>
</feature>
<reference key="1">
    <citation type="submission" date="2005-07" db="EMBL/GenBank/DDBJ databases">
        <title>Complete sequence of Synechococcus sp. CC9605.</title>
        <authorList>
            <consortium name="US DOE Joint Genome Institute"/>
            <person name="Copeland A."/>
            <person name="Lucas S."/>
            <person name="Lapidus A."/>
            <person name="Barry K."/>
            <person name="Detter J.C."/>
            <person name="Glavina T."/>
            <person name="Hammon N."/>
            <person name="Israni S."/>
            <person name="Pitluck S."/>
            <person name="Schmutz J."/>
            <person name="Martinez M."/>
            <person name="Larimer F."/>
            <person name="Land M."/>
            <person name="Kyrpides N."/>
            <person name="Ivanova N."/>
            <person name="Richardson P."/>
        </authorList>
    </citation>
    <scope>NUCLEOTIDE SEQUENCE [LARGE SCALE GENOMIC DNA]</scope>
    <source>
        <strain>CC9605</strain>
    </source>
</reference>